<protein>
    <recommendedName>
        <fullName evidence="1">tRNA-cytidine(32) 2-sulfurtransferase</fullName>
        <ecNumber evidence="1">2.8.1.-</ecNumber>
    </recommendedName>
    <alternativeName>
        <fullName evidence="1">Two-thiocytidine biosynthesis protein A</fullName>
    </alternativeName>
    <alternativeName>
        <fullName evidence="1">tRNA 2-thiocytidine biosynthesis protein TtcA</fullName>
    </alternativeName>
</protein>
<accession>A8GF18</accession>
<organism>
    <name type="scientific">Serratia proteamaculans (strain 568)</name>
    <dbReference type="NCBI Taxonomy" id="399741"/>
    <lineage>
        <taxon>Bacteria</taxon>
        <taxon>Pseudomonadati</taxon>
        <taxon>Pseudomonadota</taxon>
        <taxon>Gammaproteobacteria</taxon>
        <taxon>Enterobacterales</taxon>
        <taxon>Yersiniaceae</taxon>
        <taxon>Serratia</taxon>
    </lineage>
</organism>
<feature type="chain" id="PRO_0000348830" description="tRNA-cytidine(32) 2-sulfurtransferase">
    <location>
        <begin position="1"/>
        <end position="310"/>
    </location>
</feature>
<feature type="short sequence motif" description="PP-loop motif" evidence="1">
    <location>
        <begin position="47"/>
        <end position="52"/>
    </location>
</feature>
<feature type="binding site" evidence="1">
    <location>
        <position position="122"/>
    </location>
    <ligand>
        <name>[4Fe-4S] cluster</name>
        <dbReference type="ChEBI" id="CHEBI:49883"/>
    </ligand>
</feature>
<feature type="binding site" evidence="1">
    <location>
        <position position="125"/>
    </location>
    <ligand>
        <name>[4Fe-4S] cluster</name>
        <dbReference type="ChEBI" id="CHEBI:49883"/>
    </ligand>
</feature>
<feature type="binding site" evidence="1">
    <location>
        <position position="213"/>
    </location>
    <ligand>
        <name>[4Fe-4S] cluster</name>
        <dbReference type="ChEBI" id="CHEBI:49883"/>
    </ligand>
</feature>
<keyword id="KW-0004">4Fe-4S</keyword>
<keyword id="KW-0067">ATP-binding</keyword>
<keyword id="KW-0963">Cytoplasm</keyword>
<keyword id="KW-0408">Iron</keyword>
<keyword id="KW-0411">Iron-sulfur</keyword>
<keyword id="KW-0460">Magnesium</keyword>
<keyword id="KW-0479">Metal-binding</keyword>
<keyword id="KW-0547">Nucleotide-binding</keyword>
<keyword id="KW-0694">RNA-binding</keyword>
<keyword id="KW-0808">Transferase</keyword>
<keyword id="KW-0819">tRNA processing</keyword>
<keyword id="KW-0820">tRNA-binding</keyword>
<comment type="function">
    <text evidence="1">Catalyzes the ATP-dependent 2-thiolation of cytidine in position 32 of tRNA, to form 2-thiocytidine (s(2)C32). The sulfur atoms are provided by the cysteine/cysteine desulfurase (IscS) system.</text>
</comment>
<comment type="catalytic activity">
    <reaction evidence="1">
        <text>cytidine(32) in tRNA + S-sulfanyl-L-cysteinyl-[cysteine desulfurase] + AH2 + ATP = 2-thiocytidine(32) in tRNA + L-cysteinyl-[cysteine desulfurase] + A + AMP + diphosphate + H(+)</text>
        <dbReference type="Rhea" id="RHEA:57048"/>
        <dbReference type="Rhea" id="RHEA-COMP:10288"/>
        <dbReference type="Rhea" id="RHEA-COMP:12157"/>
        <dbReference type="Rhea" id="RHEA-COMP:12158"/>
        <dbReference type="Rhea" id="RHEA-COMP:14821"/>
        <dbReference type="ChEBI" id="CHEBI:13193"/>
        <dbReference type="ChEBI" id="CHEBI:15378"/>
        <dbReference type="ChEBI" id="CHEBI:17499"/>
        <dbReference type="ChEBI" id="CHEBI:29950"/>
        <dbReference type="ChEBI" id="CHEBI:30616"/>
        <dbReference type="ChEBI" id="CHEBI:33019"/>
        <dbReference type="ChEBI" id="CHEBI:61963"/>
        <dbReference type="ChEBI" id="CHEBI:82748"/>
        <dbReference type="ChEBI" id="CHEBI:141453"/>
        <dbReference type="ChEBI" id="CHEBI:456215"/>
    </reaction>
    <physiologicalReaction direction="left-to-right" evidence="1">
        <dbReference type="Rhea" id="RHEA:57049"/>
    </physiologicalReaction>
</comment>
<comment type="cofactor">
    <cofactor evidence="1">
        <name>Mg(2+)</name>
        <dbReference type="ChEBI" id="CHEBI:18420"/>
    </cofactor>
</comment>
<comment type="cofactor">
    <cofactor evidence="1">
        <name>[4Fe-4S] cluster</name>
        <dbReference type="ChEBI" id="CHEBI:49883"/>
    </cofactor>
    <text evidence="1">Binds 1 [4Fe-4S] cluster per subunit. The cluster is chelated by three Cys residues, the fourth Fe has a free coordination site that may bind a sulfur atom transferred from the persulfide of IscS.</text>
</comment>
<comment type="pathway">
    <text evidence="1">tRNA modification.</text>
</comment>
<comment type="subunit">
    <text evidence="1">Homodimer.</text>
</comment>
<comment type="subcellular location">
    <subcellularLocation>
        <location evidence="1">Cytoplasm</location>
    </subcellularLocation>
</comment>
<comment type="miscellaneous">
    <text evidence="1">The thiolation reaction likely consists of two steps: a first activation step by ATP to form an adenylated intermediate of the target base of tRNA, and a second nucleophilic substitution step of the sulfur (S) atom supplied by the hydrosulfide attached to the Fe-S cluster.</text>
</comment>
<comment type="similarity">
    <text evidence="1">Belongs to the TtcA family.</text>
</comment>
<name>TTCA_SERP5</name>
<sequence>MSEQQTVSQKEQYNLNKLQKRLRRNVGQAIADFNMIEEGDRIMVCLSGGKDSYTMLEILRNLQQSAPVNFSLVAVNLDQKQPGFPEHILPAYLESLGVEYQIVEENTYSIVKDKIPEGKTTCSLCSRLRRGILYRTATELGATKIALGHHRDDILQTLFLNMFYGGKLKGMPPKLMSDDGKHVVIRPLAYCREKDIERFSVAKGFPIIPCNLCGSQPNLQRQVIGDMLRDWDKRYPGRLETMFSAMQNVVPSHLSDYNLFDFKGIHHGSEVVDGGDLAFDREDIPMQPIGWQPEDADDAAPVRLDVLEIK</sequence>
<reference key="1">
    <citation type="submission" date="2007-09" db="EMBL/GenBank/DDBJ databases">
        <title>Complete sequence of chromosome of Serratia proteamaculans 568.</title>
        <authorList>
            <consortium name="US DOE Joint Genome Institute"/>
            <person name="Copeland A."/>
            <person name="Lucas S."/>
            <person name="Lapidus A."/>
            <person name="Barry K."/>
            <person name="Glavina del Rio T."/>
            <person name="Dalin E."/>
            <person name="Tice H."/>
            <person name="Pitluck S."/>
            <person name="Chain P."/>
            <person name="Malfatti S."/>
            <person name="Shin M."/>
            <person name="Vergez L."/>
            <person name="Schmutz J."/>
            <person name="Larimer F."/>
            <person name="Land M."/>
            <person name="Hauser L."/>
            <person name="Kyrpides N."/>
            <person name="Kim E."/>
            <person name="Taghavi S."/>
            <person name="Newman L."/>
            <person name="Vangronsveld J."/>
            <person name="van der Lelie D."/>
            <person name="Richardson P."/>
        </authorList>
    </citation>
    <scope>NUCLEOTIDE SEQUENCE [LARGE SCALE GENOMIC DNA]</scope>
    <source>
        <strain>568</strain>
    </source>
</reference>
<dbReference type="EC" id="2.8.1.-" evidence="1"/>
<dbReference type="EMBL" id="CP000826">
    <property type="protein sequence ID" value="ABV41708.1"/>
    <property type="molecule type" value="Genomic_DNA"/>
</dbReference>
<dbReference type="SMR" id="A8GF18"/>
<dbReference type="STRING" id="399741.Spro_2607"/>
<dbReference type="KEGG" id="spe:Spro_2607"/>
<dbReference type="eggNOG" id="COG0037">
    <property type="taxonomic scope" value="Bacteria"/>
</dbReference>
<dbReference type="HOGENOM" id="CLU_026481_0_0_6"/>
<dbReference type="OrthoDB" id="9801054at2"/>
<dbReference type="GO" id="GO:0005737">
    <property type="term" value="C:cytoplasm"/>
    <property type="evidence" value="ECO:0007669"/>
    <property type="project" value="UniProtKB-SubCell"/>
</dbReference>
<dbReference type="GO" id="GO:0051539">
    <property type="term" value="F:4 iron, 4 sulfur cluster binding"/>
    <property type="evidence" value="ECO:0007669"/>
    <property type="project" value="UniProtKB-UniRule"/>
</dbReference>
<dbReference type="GO" id="GO:0005524">
    <property type="term" value="F:ATP binding"/>
    <property type="evidence" value="ECO:0007669"/>
    <property type="project" value="UniProtKB-UniRule"/>
</dbReference>
<dbReference type="GO" id="GO:0000287">
    <property type="term" value="F:magnesium ion binding"/>
    <property type="evidence" value="ECO:0007669"/>
    <property type="project" value="UniProtKB-UniRule"/>
</dbReference>
<dbReference type="GO" id="GO:0016783">
    <property type="term" value="F:sulfurtransferase activity"/>
    <property type="evidence" value="ECO:0007669"/>
    <property type="project" value="UniProtKB-UniRule"/>
</dbReference>
<dbReference type="GO" id="GO:0000049">
    <property type="term" value="F:tRNA binding"/>
    <property type="evidence" value="ECO:0007669"/>
    <property type="project" value="UniProtKB-KW"/>
</dbReference>
<dbReference type="GO" id="GO:0034227">
    <property type="term" value="P:tRNA thio-modification"/>
    <property type="evidence" value="ECO:0007669"/>
    <property type="project" value="UniProtKB-UniRule"/>
</dbReference>
<dbReference type="CDD" id="cd24138">
    <property type="entry name" value="TtcA-like"/>
    <property type="match status" value="1"/>
</dbReference>
<dbReference type="Gene3D" id="3.40.50.620">
    <property type="entry name" value="HUPs"/>
    <property type="match status" value="1"/>
</dbReference>
<dbReference type="HAMAP" id="MF_01850">
    <property type="entry name" value="TtcA"/>
    <property type="match status" value="1"/>
</dbReference>
<dbReference type="InterPro" id="IPR014729">
    <property type="entry name" value="Rossmann-like_a/b/a_fold"/>
</dbReference>
<dbReference type="InterPro" id="IPR011063">
    <property type="entry name" value="TilS/TtcA_N"/>
</dbReference>
<dbReference type="InterPro" id="IPR012089">
    <property type="entry name" value="tRNA_Cyd_32_2_STrfase"/>
</dbReference>
<dbReference type="InterPro" id="IPR035107">
    <property type="entry name" value="tRNA_thiolation_TtcA_Ctu1"/>
</dbReference>
<dbReference type="NCBIfam" id="NF007972">
    <property type="entry name" value="PRK10696.1"/>
    <property type="match status" value="1"/>
</dbReference>
<dbReference type="PANTHER" id="PTHR43686:SF1">
    <property type="entry name" value="AMINOTRAN_5 DOMAIN-CONTAINING PROTEIN"/>
    <property type="match status" value="1"/>
</dbReference>
<dbReference type="PANTHER" id="PTHR43686">
    <property type="entry name" value="SULFURTRANSFERASE-RELATED"/>
    <property type="match status" value="1"/>
</dbReference>
<dbReference type="Pfam" id="PF01171">
    <property type="entry name" value="ATP_bind_3"/>
    <property type="match status" value="1"/>
</dbReference>
<dbReference type="PIRSF" id="PIRSF004976">
    <property type="entry name" value="ATPase_YdaO"/>
    <property type="match status" value="1"/>
</dbReference>
<dbReference type="SUPFAM" id="SSF52402">
    <property type="entry name" value="Adenine nucleotide alpha hydrolases-like"/>
    <property type="match status" value="1"/>
</dbReference>
<evidence type="ECO:0000255" key="1">
    <source>
        <dbReference type="HAMAP-Rule" id="MF_01850"/>
    </source>
</evidence>
<proteinExistence type="inferred from homology"/>
<gene>
    <name evidence="1" type="primary">ttcA</name>
    <name type="ordered locus">Spro_2607</name>
</gene>